<name>ACHA3_HUMAN</name>
<comment type="function">
    <text evidence="2 4 14 17 18 19">Component of neuronal acetylcholine receptors (nAChRs) that function as pentameric, ligand-gated cation channels with high calcium permeability among other activities. nAChRs are excitatory neurotrasnmitter receptors formed by a collection of nAChR subunits known to mediate synaptic transmission in the nervous system and the neuromuscular junction. Each nAchR subunit confers differential attributes to channel properties, including activation, deactivation and desensitization kinetics, pH sensitivity, cation permeability, and binding to allosteric modulators (PubMed:31488329, PubMed:31708116). CHRNA3 forms heteropentameric neuronal acetylcholine receptors with CHRNB2 and CHRNB4, with CHRNA5, and CHRNB3 as accesory subunits (PubMed:20881005, PubMed:8663494). CHRNA3:CHRNB4 being predominant in neurons of the autonomic ganglia, it is known as ganglionic nicotinic receptor (PubMed:31488329). CHRNA3:CHRNB4 or CHRNA3:CHRNA5:CHRNB4 play also an important role in the habenulo-interpeduncular tract, modulating the mesolimbic dopamine system and affecting reward circuits and addiction (By similarity). Hypothalamic CHRNA3:CHRNB4 nAChR activation by nicotine leads to activation of POMC neurons and a decrease in food intake (By similarity). Also expressed in the urothelium where it modulates reflex bladder activity by increasing intracellular calcium through extracellular influx and basal ATP release (By similarity).</text>
</comment>
<comment type="catalytic activity">
    <reaction evidence="14">
        <text>Ca(2+)(in) = Ca(2+)(out)</text>
        <dbReference type="Rhea" id="RHEA:29671"/>
        <dbReference type="ChEBI" id="CHEBI:29108"/>
    </reaction>
</comment>
<comment type="catalytic activity">
    <reaction evidence="1">
        <text>K(+)(in) = K(+)(out)</text>
        <dbReference type="Rhea" id="RHEA:29463"/>
        <dbReference type="ChEBI" id="CHEBI:29103"/>
    </reaction>
</comment>
<comment type="catalytic activity">
    <reaction evidence="3">
        <text>Na(+)(in) = Na(+)(out)</text>
        <dbReference type="Rhea" id="RHEA:34963"/>
        <dbReference type="ChEBI" id="CHEBI:29101"/>
    </reaction>
</comment>
<comment type="activity regulation">
    <text evidence="2 6 8 14 17 20">Activated by a myriad of ligands such as acetylcholine, cytisine, nicotine, choline and epibatidine (PubMed:11118490, PubMed:20881005, PubMed:31488329, PubMed:8906617). The heteropentamer CHRNA3:CHRNB2 activity is blocked by alpha-conotoxins ImI, ImII, PnIA, GID and MII (By similarity). The heteropentamer CHRNA3:CHRNB4 activity is blocked by the alpha-conotoxin ImI and AuIB (PubMed:15609996).</text>
</comment>
<comment type="subunit">
    <text evidence="6 8 9 14 15 16 17 19">Neuronal AChR is composed of two different types of subunits: alpha and beta. CHRNA3/Alpha-3 subunit can be combined to CHRNA5/alpha-5, CHRNB2/beta-2 CHRNB3/beta-3 or CHRNB4/beta-4 to give rise to functional receptors (PubMed:20881005, PubMed:31488329, PubMed:8663494). Forms stoichiometries such as (CHRNA3)2:(CHRNB4)3 or (CHRNA3:CHRNB4)2:CHRNB3 (PubMed:11118490). Part of a complex composed of STUB1/CHIP, VCP/p97, CHRNA3, and UBXN2A that modulates the ubiquitination and endoplasmic reticulum-associated degradation (ERAD) of CHRNA3 (PubMed:26265139). Within the complex UBXN2A acts as a scaffold protein required for the interaction of CHRNA3 with VCP/p97, this interaction also inhibits CHRNA3 ubiquitination by STUB1/CHIP and subsequently ERAD (PubMed:26265139). Interacts with UBXN2A (via SEP domain), the interaction is required for the interaction of CHRNA3 in the STUB1:VCP:UBXN2A complex (PubMed:26265139). Interacts with RIC3; which is required for proper folding and assembly (PubMed:16120769). Interacts with LYPD6 (PubMed:27344019).</text>
</comment>
<comment type="subcellular location">
    <subcellularLocation>
        <location evidence="2">Synaptic cell membrane</location>
        <topology evidence="5">Multi-pass membrane protein</topology>
    </subcellularLocation>
    <subcellularLocation>
        <location evidence="18">Cell membrane</location>
        <topology evidence="5">Multi-pass membrane protein</topology>
    </subcellularLocation>
    <subcellularLocation>
        <location evidence="2">Endoplasmic reticulum</location>
    </subcellularLocation>
    <subcellularLocation>
        <location evidence="2">Golgi apparatus</location>
    </subcellularLocation>
    <text evidence="2">Interaction with UBXN2A/UBXD4 promotes translocation to the plasma membrane.</text>
</comment>
<comment type="alternative products">
    <event type="alternative splicing"/>
    <isoform>
        <id>P32297-2</id>
        <name>2</name>
        <sequence type="displayed"/>
    </isoform>
    <isoform>
        <id>P32297-1</id>
        <name>1</name>
        <sequence type="described" ref="VSP_037750"/>
    </isoform>
    <isoform>
        <id>P32297-3</id>
        <name>3</name>
        <sequence type="described" ref="VSP_037751"/>
    </isoform>
</comment>
<comment type="PTM">
    <text evidence="2">Ubiquitinated; by STUB1/CHIP and thereafter degraded by the 26S proteosome complex.</text>
</comment>
<comment type="polymorphism">
    <text evidence="10 11 12 13">Genetic variations in CHRNA3 have been associated with susceptibility to smoking-related behavioral traits and lung cancer, contributing to the smoking quantitative trait locus 3 (SQTL3) [MIM:612052].</text>
</comment>
<comment type="disease" evidence="18">
    <disease id="DI-05743">
        <name>Bladder dysfunction, autonomic, with impaired pupillary reflex and secondary CAKUT</name>
        <acronym>BAIPRCK</acronym>
        <description>An autosomal recessive disease characterized by impaired innervation and autonomic dysfunction of the urinary bladder, hydronephrosis, vesicoureteral reflux, small kidneys, recurrent urinary tract infections, and progressive renal insufficiency. Additional autonomic features are impaired pupillary reflex and orthostatic hypotension. The disease manifests in utero or early childhood.</description>
        <dbReference type="MIM" id="191800"/>
    </disease>
    <text>The disease is caused by variants affecting the gene represented in this entry.</text>
</comment>
<comment type="similarity">
    <text evidence="28">Belongs to the ligand-gated ion channel (TC 1.A.9) family. Acetylcholine receptor (TC 1.A.9.1) subfamily. Alpha-3/CHRNA3 sub-subfamily.</text>
</comment>
<feature type="signal peptide" evidence="5">
    <location>
        <begin position="1"/>
        <end position="31"/>
    </location>
</feature>
<feature type="chain" id="PRO_0000000346" description="Neuronal acetylcholine receptor subunit alpha-3">
    <location>
        <begin position="32"/>
        <end position="505"/>
    </location>
</feature>
<feature type="topological domain" description="Extracellular" evidence="17 30">
    <location>
        <begin position="32"/>
        <end position="250"/>
    </location>
</feature>
<feature type="transmembrane region" description="Helical" evidence="17 30">
    <location>
        <begin position="251"/>
        <end position="266"/>
    </location>
</feature>
<feature type="topological domain" description="Cytoplasmic" evidence="17 30">
    <location>
        <begin position="267"/>
        <end position="268"/>
    </location>
</feature>
<feature type="transmembrane region" description="Helical" evidence="17 30">
    <location>
        <begin position="269"/>
        <end position="285"/>
    </location>
</feature>
<feature type="topological domain" description="Extracellular" evidence="17 30">
    <location>
        <begin position="286"/>
        <end position="307"/>
    </location>
</feature>
<feature type="transmembrane region" description="Helical" evidence="17 30">
    <location>
        <begin position="308"/>
        <end position="326"/>
    </location>
</feature>
<feature type="topological domain" description="Cytoplasmic" evidence="17 30">
    <location>
        <begin position="327"/>
        <end position="474"/>
    </location>
</feature>
<feature type="transmembrane region" description="Helical" evidence="17 30">
    <location>
        <begin position="475"/>
        <end position="493"/>
    </location>
</feature>
<feature type="topological domain" description="Extracellular" evidence="17 30">
    <location>
        <begin position="494"/>
        <end position="505"/>
    </location>
</feature>
<feature type="modified residue" description="Phosphoserine" evidence="2">
    <location>
        <position position="413"/>
    </location>
</feature>
<feature type="modified residue" description="Phosphoserine" evidence="2">
    <location>
        <position position="416"/>
    </location>
</feature>
<feature type="glycosylation site" description="N-linked (GlcNAc...) asparagine" evidence="5">
    <location>
        <position position="55"/>
    </location>
</feature>
<feature type="glycosylation site" description="N-linked (GlcNAc...) asparagine" evidence="5">
    <location>
        <position position="172"/>
    </location>
</feature>
<feature type="disulfide bond" evidence="17 30 31">
    <location>
        <begin position="159"/>
        <end position="173"/>
    </location>
</feature>
<feature type="disulfide bond" description="Associated with receptor activation" evidence="17 30 31">
    <location>
        <begin position="223"/>
        <end position="224"/>
    </location>
</feature>
<feature type="splice variant" id="VSP_037750" description="In isoform 1." evidence="24 25 26">
    <original>MGSGPL</original>
    <variation>MALAV</variation>
    <location>
        <begin position="1"/>
        <end position="6"/>
    </location>
</feature>
<feature type="splice variant" id="VSP_037751" description="In isoform 3." evidence="23 27">
    <original>IQDDWKYVAMVIDRIFLWVFTLVCILGTAGLFLQPLMAREDA</original>
    <variation>EQKAQEIQQLKRKEKSTETSDQEPGL</variation>
    <location>
        <begin position="464"/>
        <end position="505"/>
    </location>
</feature>
<feature type="sequence variant" id="VAR_013240" evidence="7 20 21 22">
    <location>
        <position position="23"/>
    </location>
</feature>
<feature type="sequence variant" id="VAR_059110" description="In dbSNP:rs8192475.">
    <original>R</original>
    <variation>H</variation>
    <location>
        <position position="37"/>
    </location>
</feature>
<feature type="sequence variant" id="VAR_083543" description="In BAIPRCK; loss-of-function variant affecting ion transmembrane transport in response to acetylcholine; does not localize to plasma membrane." evidence="18">
    <location>
        <begin position="340"/>
        <end position="505"/>
    </location>
</feature>
<feature type="mutagenesis site" description="Increases potency of agonists." evidence="6">
    <original>V</original>
    <variation>T</variation>
    <location>
        <position position="279"/>
    </location>
</feature>
<feature type="sequence conflict" description="In Ref. 2; AAA59942." evidence="28" ref="2">
    <original>PLSLPLALSP</original>
    <variation>ALAAPGAVA</variation>
    <location>
        <begin position="5"/>
        <end position="14"/>
    </location>
</feature>
<feature type="sequence conflict" description="In Ref. 1; AAC84176." evidence="28" ref="1">
    <original>LSPP</original>
    <variation>CRA</variation>
    <location>
        <begin position="12"/>
        <end position="15"/>
    </location>
</feature>
<feature type="sequence conflict" description="In Ref. 1; AAC84176." evidence="28" ref="1">
    <original>D</original>
    <variation>G</variation>
    <location>
        <position position="102"/>
    </location>
</feature>
<feature type="sequence conflict" description="In Ref. 1; AAC84176." evidence="28" ref="1">
    <original>DD</original>
    <variation>TT</variation>
    <location>
        <begin position="134"/>
        <end position="135"/>
    </location>
</feature>
<feature type="sequence conflict" description="In Ref. 1; AAC84176." evidence="28" ref="1">
    <original>I</original>
    <variation>S</variation>
    <location>
        <position position="237"/>
    </location>
</feature>
<feature type="sequence conflict" description="In Ref. 1; AAC84176." evidence="28" ref="1">
    <original>L</original>
    <variation>V</variation>
    <location>
        <position position="432"/>
    </location>
</feature>
<feature type="helix" evidence="33">
    <location>
        <begin position="33"/>
        <end position="42"/>
    </location>
</feature>
<feature type="strand" evidence="33">
    <location>
        <begin position="60"/>
        <end position="75"/>
    </location>
</feature>
<feature type="turn" evidence="33">
    <location>
        <begin position="76"/>
        <end position="79"/>
    </location>
</feature>
<feature type="strand" evidence="33">
    <location>
        <begin position="80"/>
        <end position="92"/>
    </location>
</feature>
<feature type="strand" evidence="33">
    <location>
        <begin position="94"/>
        <end position="96"/>
    </location>
</feature>
<feature type="turn" evidence="33">
    <location>
        <begin position="100"/>
        <end position="105"/>
    </location>
</feature>
<feature type="strand" evidence="33">
    <location>
        <begin position="108"/>
        <end position="112"/>
    </location>
</feature>
<feature type="turn" evidence="33">
    <location>
        <begin position="113"/>
        <end position="115"/>
    </location>
</feature>
<feature type="strand" evidence="33">
    <location>
        <begin position="124"/>
        <end position="126"/>
    </location>
</feature>
<feature type="strand" evidence="33">
    <location>
        <begin position="137"/>
        <end position="142"/>
    </location>
</feature>
<feature type="strand" evidence="33">
    <location>
        <begin position="145"/>
        <end position="149"/>
    </location>
</feature>
<feature type="strand" evidence="33">
    <location>
        <begin position="152"/>
        <end position="157"/>
    </location>
</feature>
<feature type="strand" evidence="33">
    <location>
        <begin position="164"/>
        <end position="168"/>
    </location>
</feature>
<feature type="strand" evidence="33">
    <location>
        <begin position="170"/>
        <end position="177"/>
    </location>
</feature>
<feature type="strand" evidence="33">
    <location>
        <begin position="179"/>
        <end position="181"/>
    </location>
</feature>
<feature type="turn" evidence="33">
    <location>
        <begin position="184"/>
        <end position="186"/>
    </location>
</feature>
<feature type="strand" evidence="33">
    <location>
        <begin position="187"/>
        <end position="195"/>
    </location>
</feature>
<feature type="strand" evidence="33">
    <location>
        <begin position="205"/>
        <end position="211"/>
    </location>
</feature>
<feature type="strand" evidence="32">
    <location>
        <begin position="215"/>
        <end position="220"/>
    </location>
</feature>
<feature type="strand" evidence="32">
    <location>
        <begin position="225"/>
        <end position="230"/>
    </location>
</feature>
<feature type="helix" evidence="33">
    <location>
        <begin position="245"/>
        <end position="249"/>
    </location>
</feature>
<feature type="helix" evidence="33">
    <location>
        <begin position="250"/>
        <end position="256"/>
    </location>
</feature>
<feature type="helix" evidence="33">
    <location>
        <begin position="261"/>
        <end position="264"/>
    </location>
</feature>
<feature type="helix" evidence="33">
    <location>
        <begin position="272"/>
        <end position="293"/>
    </location>
</feature>
<feature type="helix" evidence="33">
    <location>
        <begin position="303"/>
        <end position="329"/>
    </location>
</feature>
<feature type="turn" evidence="33">
    <location>
        <begin position="333"/>
        <end position="335"/>
    </location>
</feature>
<feature type="helix" evidence="33">
    <location>
        <begin position="341"/>
        <end position="344"/>
    </location>
</feature>
<feature type="helix" evidence="33">
    <location>
        <begin position="345"/>
        <end position="349"/>
    </location>
</feature>
<feature type="helix" evidence="33">
    <location>
        <begin position="350"/>
        <end position="353"/>
    </location>
</feature>
<feature type="helix" evidence="33">
    <location>
        <begin position="442"/>
        <end position="493"/>
    </location>
</feature>
<feature type="turn" evidence="33">
    <location>
        <begin position="494"/>
        <end position="499"/>
    </location>
</feature>
<organism>
    <name type="scientific">Homo sapiens</name>
    <name type="common">Human</name>
    <dbReference type="NCBI Taxonomy" id="9606"/>
    <lineage>
        <taxon>Eukaryota</taxon>
        <taxon>Metazoa</taxon>
        <taxon>Chordata</taxon>
        <taxon>Craniata</taxon>
        <taxon>Vertebrata</taxon>
        <taxon>Euteleostomi</taxon>
        <taxon>Mammalia</taxon>
        <taxon>Eutheria</taxon>
        <taxon>Euarchontoglires</taxon>
        <taxon>Primates</taxon>
        <taxon>Haplorrhini</taxon>
        <taxon>Catarrhini</taxon>
        <taxon>Hominidae</taxon>
        <taxon>Homo</taxon>
    </lineage>
</organism>
<evidence type="ECO:0000250" key="1">
    <source>
        <dbReference type="UniProtKB" id="P02709"/>
    </source>
</evidence>
<evidence type="ECO:0000250" key="2">
    <source>
        <dbReference type="UniProtKB" id="P04757"/>
    </source>
</evidence>
<evidence type="ECO:0000250" key="3">
    <source>
        <dbReference type="UniProtKB" id="P43681"/>
    </source>
</evidence>
<evidence type="ECO:0000250" key="4">
    <source>
        <dbReference type="UniProtKB" id="Q8R4G9"/>
    </source>
</evidence>
<evidence type="ECO:0000255" key="5"/>
<evidence type="ECO:0000269" key="6">
    <source>
    </source>
</evidence>
<evidence type="ECO:0000269" key="7">
    <source>
    </source>
</evidence>
<evidence type="ECO:0000269" key="8">
    <source>
    </source>
</evidence>
<evidence type="ECO:0000269" key="9">
    <source>
    </source>
</evidence>
<evidence type="ECO:0000269" key="10">
    <source>
    </source>
</evidence>
<evidence type="ECO:0000269" key="11">
    <source>
    </source>
</evidence>
<evidence type="ECO:0000269" key="12">
    <source>
    </source>
</evidence>
<evidence type="ECO:0000269" key="13">
    <source>
    </source>
</evidence>
<evidence type="ECO:0000269" key="14">
    <source>
    </source>
</evidence>
<evidence type="ECO:0000269" key="15">
    <source>
    </source>
</evidence>
<evidence type="ECO:0000269" key="16">
    <source>
    </source>
</evidence>
<evidence type="ECO:0000269" key="17">
    <source>
    </source>
</evidence>
<evidence type="ECO:0000269" key="18">
    <source>
    </source>
</evidence>
<evidence type="ECO:0000269" key="19">
    <source>
    </source>
</evidence>
<evidence type="ECO:0000269" key="20">
    <source>
    </source>
</evidence>
<evidence type="ECO:0000269" key="21">
    <source>
    </source>
</evidence>
<evidence type="ECO:0000269" key="22">
    <source>
    </source>
</evidence>
<evidence type="ECO:0000303" key="23">
    <source>
    </source>
</evidence>
<evidence type="ECO:0000303" key="24">
    <source>
    </source>
</evidence>
<evidence type="ECO:0000303" key="25">
    <source>
    </source>
</evidence>
<evidence type="ECO:0000303" key="26">
    <source>
    </source>
</evidence>
<evidence type="ECO:0000303" key="27">
    <source ref="7"/>
</evidence>
<evidence type="ECO:0000305" key="28"/>
<evidence type="ECO:0000312" key="29">
    <source>
        <dbReference type="HGNC" id="HGNC:1957"/>
    </source>
</evidence>
<evidence type="ECO:0007744" key="30">
    <source>
        <dbReference type="PDB" id="6PV7"/>
    </source>
</evidence>
<evidence type="ECO:0007744" key="31">
    <source>
        <dbReference type="PDB" id="6PV8"/>
    </source>
</evidence>
<evidence type="ECO:0007829" key="32">
    <source>
        <dbReference type="PDB" id="4ZK4"/>
    </source>
</evidence>
<evidence type="ECO:0007829" key="33">
    <source>
        <dbReference type="PDB" id="6PV7"/>
    </source>
</evidence>
<gene>
    <name evidence="29" type="primary">CHRNA3</name>
    <name type="synonym">NACHRA3</name>
</gene>
<accession>P32297</accession>
<accession>Q15823</accession>
<accession>Q4KMN8</accession>
<accession>Q86U77</accession>
<accession>Q96RH3</accession>
<accession>Q99553</accession>
<accession>Q9BQ93</accession>
<accession>Q9BRR4</accession>
<dbReference type="EMBL" id="M86383">
    <property type="protein sequence ID" value="AAC84176.1"/>
    <property type="molecule type" value="mRNA"/>
</dbReference>
<dbReference type="EMBL" id="M37981">
    <property type="protein sequence ID" value="AAA59942.1"/>
    <property type="molecule type" value="mRNA"/>
</dbReference>
<dbReference type="EMBL" id="U62432">
    <property type="protein sequence ID" value="AAB40110.1"/>
    <property type="molecule type" value="mRNA"/>
</dbReference>
<dbReference type="EMBL" id="Y08418">
    <property type="protein sequence ID" value="CAA69695.1"/>
    <property type="molecule type" value="mRNA"/>
</dbReference>
<dbReference type="EMBL" id="AJ007783">
    <property type="protein sequence ID" value="CAA07682.1"/>
    <property type="molecule type" value="Genomic_DNA"/>
</dbReference>
<dbReference type="EMBL" id="AJ007784">
    <property type="protein sequence ID" value="CAA07682.1"/>
    <property type="status" value="JOINED"/>
    <property type="molecule type" value="Genomic_DNA"/>
</dbReference>
<dbReference type="EMBL" id="AJ007785">
    <property type="protein sequence ID" value="CAA07682.1"/>
    <property type="status" value="JOINED"/>
    <property type="molecule type" value="Genomic_DNA"/>
</dbReference>
<dbReference type="EMBL" id="AJ007786">
    <property type="protein sequence ID" value="CAA07682.1"/>
    <property type="status" value="JOINED"/>
    <property type="molecule type" value="Genomic_DNA"/>
</dbReference>
<dbReference type="EMBL" id="AJ007787">
    <property type="protein sequence ID" value="CAA07682.1"/>
    <property type="status" value="JOINED"/>
    <property type="molecule type" value="Genomic_DNA"/>
</dbReference>
<dbReference type="EMBL" id="BT006646">
    <property type="protein sequence ID" value="AAP35292.1"/>
    <property type="molecule type" value="mRNA"/>
</dbReference>
<dbReference type="EMBL" id="BT006897">
    <property type="protein sequence ID" value="AAP35543.1"/>
    <property type="molecule type" value="mRNA"/>
</dbReference>
<dbReference type="EMBL" id="AC027228">
    <property type="status" value="NOT_ANNOTATED_CDS"/>
    <property type="molecule type" value="Genomic_DNA"/>
</dbReference>
<dbReference type="EMBL" id="AC067863">
    <property type="status" value="NOT_ANNOTATED_CDS"/>
    <property type="molecule type" value="Genomic_DNA"/>
</dbReference>
<dbReference type="EMBL" id="BC000513">
    <property type="protein sequence ID" value="AAH00513.1"/>
    <property type="molecule type" value="mRNA"/>
</dbReference>
<dbReference type="EMBL" id="BC001642">
    <property type="protein sequence ID" value="AAH01642.1"/>
    <property type="molecule type" value="mRNA"/>
</dbReference>
<dbReference type="EMBL" id="BC002996">
    <property type="protein sequence ID" value="AAH02996.1"/>
    <property type="molecule type" value="mRNA"/>
</dbReference>
<dbReference type="EMBL" id="BC006114">
    <property type="protein sequence ID" value="AAH06114.1"/>
    <property type="molecule type" value="mRNA"/>
</dbReference>
<dbReference type="EMBL" id="BC098443">
    <property type="protein sequence ID" value="AAH98443.1"/>
    <property type="molecule type" value="mRNA"/>
</dbReference>
<dbReference type="EMBL" id="AF385584">
    <property type="protein sequence ID" value="AAK68110.1"/>
    <property type="molecule type" value="mRNA"/>
</dbReference>
<dbReference type="EMBL" id="X53559">
    <property type="protein sequence ID" value="CAA37625.1"/>
    <property type="molecule type" value="mRNA"/>
</dbReference>
<dbReference type="CCDS" id="CCDS10305.1">
    <molecule id="P32297-2"/>
</dbReference>
<dbReference type="CCDS" id="CCDS53964.1">
    <molecule id="P32297-3"/>
</dbReference>
<dbReference type="PIR" id="A37040">
    <property type="entry name" value="A37040"/>
</dbReference>
<dbReference type="PIR" id="A53956">
    <property type="entry name" value="A53956"/>
</dbReference>
<dbReference type="RefSeq" id="NP_000734.2">
    <molecule id="P32297-2"/>
    <property type="nucleotide sequence ID" value="NM_000743.4"/>
</dbReference>
<dbReference type="RefSeq" id="NP_001160166.1">
    <molecule id="P32297-3"/>
    <property type="nucleotide sequence ID" value="NM_001166694.2"/>
</dbReference>
<dbReference type="PDB" id="4ZK4">
    <property type="method" value="X-ray"/>
    <property type="resolution" value="1.90 A"/>
    <property type="chains" value="A/B/C/D/E=215-230"/>
</dbReference>
<dbReference type="PDB" id="5SYO">
    <property type="method" value="X-ray"/>
    <property type="resolution" value="2.00 A"/>
    <property type="chains" value="A/B/C/D/E=215-230"/>
</dbReference>
<dbReference type="PDB" id="5TVC">
    <property type="method" value="X-ray"/>
    <property type="resolution" value="1.93 A"/>
    <property type="chains" value="A/B/C/D/E=215-230"/>
</dbReference>
<dbReference type="PDB" id="6PV7">
    <property type="method" value="EM"/>
    <property type="resolution" value="3.34 A"/>
    <property type="chains" value="A/D=32-378, A/D=434-505"/>
</dbReference>
<dbReference type="PDB" id="6PV8">
    <property type="method" value="EM"/>
    <property type="resolution" value="3.87 A"/>
    <property type="chains" value="A/D=32-378, A/D=434-505"/>
</dbReference>
<dbReference type="PDBsum" id="4ZK4"/>
<dbReference type="PDBsum" id="5SYO"/>
<dbReference type="PDBsum" id="5TVC"/>
<dbReference type="PDBsum" id="6PV7"/>
<dbReference type="PDBsum" id="6PV8"/>
<dbReference type="EMDB" id="EMD-20487"/>
<dbReference type="EMDB" id="EMD-20488"/>
<dbReference type="SMR" id="P32297"/>
<dbReference type="BioGRID" id="107558">
    <property type="interactions" value="36"/>
</dbReference>
<dbReference type="ComplexPortal" id="CPX-187">
    <property type="entry name" value="Neuronal nicotinic acetylcholine receptor complex, alpha3-alpha5-beta2"/>
</dbReference>
<dbReference type="ComplexPortal" id="CPX-210">
    <property type="entry name" value="Neuronal nicotinic acetylcholine receptor complex, alpha3-alpha5-beta4"/>
</dbReference>
<dbReference type="ComplexPortal" id="CPX-213">
    <property type="entry name" value="Neuronal nicotinic acetylcholine receptor complex, alpha3-alpha6-beta4"/>
</dbReference>
<dbReference type="ComplexPortal" id="CPX-2192">
    <property type="entry name" value="Neuronal nicotinic acetylcholine receptor complex, alpha3-alpha6-beta2-beta3"/>
</dbReference>
<dbReference type="ComplexPortal" id="CPX-2193">
    <property type="entry name" value="Neuronal nicotinic acetylcholine receptor complex, alpha3-beta2"/>
</dbReference>
<dbReference type="ComplexPortal" id="CPX-2200">
    <property type="entry name" value="Neuronal nicotinic acetylcholine receptor complex, alpha3-beta4"/>
</dbReference>
<dbReference type="CORUM" id="P32297"/>
<dbReference type="FunCoup" id="P32297">
    <property type="interactions" value="745"/>
</dbReference>
<dbReference type="IntAct" id="P32297">
    <property type="interactions" value="37"/>
</dbReference>
<dbReference type="STRING" id="9606.ENSP00000315602"/>
<dbReference type="BindingDB" id="P32297"/>
<dbReference type="ChEMBL" id="CHEMBL3068"/>
<dbReference type="DrugBank" id="DB15096">
    <property type="generic name" value="18-methoxycoronaridine"/>
</dbReference>
<dbReference type="DrugBank" id="DB00915">
    <property type="generic name" value="Amantadine"/>
</dbReference>
<dbReference type="DrugBank" id="DB01156">
    <property type="generic name" value="Bupropion"/>
</dbReference>
<dbReference type="DrugBank" id="DB00237">
    <property type="generic name" value="Butabarbital"/>
</dbReference>
<dbReference type="DrugBank" id="DB00565">
    <property type="generic name" value="Cisatracurium"/>
</dbReference>
<dbReference type="DrugBank" id="DB09028">
    <property type="generic name" value="Cytisine"/>
</dbReference>
<dbReference type="DrugBank" id="DB00514">
    <property type="generic name" value="Dextromethorphan"/>
</dbReference>
<dbReference type="DrugBank" id="DB07720">
    <property type="generic name" value="Epibatidine"/>
</dbReference>
<dbReference type="DrugBank" id="DB00898">
    <property type="generic name" value="Ethanol"/>
</dbReference>
<dbReference type="DrugBank" id="DB00472">
    <property type="generic name" value="Fluoxetine"/>
</dbReference>
<dbReference type="DrugBank" id="DB05710">
    <property type="generic name" value="Gantacurium"/>
</dbReference>
<dbReference type="DrugBank" id="DB01227">
    <property type="generic name" value="Levacetylmethadol"/>
</dbReference>
<dbReference type="DrugBank" id="DB00848">
    <property type="generic name" value="Levamisole"/>
</dbReference>
<dbReference type="DrugBank" id="DB00333">
    <property type="generic name" value="Methadone"/>
</dbReference>
<dbReference type="DrugBank" id="DB00184">
    <property type="generic name" value="Nicotine"/>
</dbReference>
<dbReference type="DrugBank" id="DB01090">
    <property type="generic name" value="Pentolinium"/>
</dbReference>
<dbReference type="DrugBank" id="DB00202">
    <property type="generic name" value="Succinylcholine"/>
</dbReference>
<dbReference type="DrugBank" id="DB06402">
    <property type="generic name" value="Telavancin"/>
</dbReference>
<dbReference type="DrugBank" id="DB01273">
    <property type="generic name" value="Varenicline"/>
</dbReference>
<dbReference type="DrugCentral" id="P32297"/>
<dbReference type="GuidetoPHARMACOLOGY" id="464"/>
<dbReference type="GlyCosmos" id="P32297">
    <property type="glycosylation" value="2 sites, No reported glycans"/>
</dbReference>
<dbReference type="GlyGen" id="P32297">
    <property type="glycosylation" value="2 sites"/>
</dbReference>
<dbReference type="iPTMnet" id="P32297"/>
<dbReference type="PhosphoSitePlus" id="P32297"/>
<dbReference type="BioMuta" id="CHRNA3"/>
<dbReference type="DMDM" id="254763435"/>
<dbReference type="MassIVE" id="P32297"/>
<dbReference type="PaxDb" id="9606-ENSP00000315602"/>
<dbReference type="PeptideAtlas" id="P32297"/>
<dbReference type="ProteomicsDB" id="54858">
    <molecule id="P32297-2"/>
</dbReference>
<dbReference type="ProteomicsDB" id="54859">
    <molecule id="P32297-1"/>
</dbReference>
<dbReference type="ProteomicsDB" id="54860">
    <molecule id="P32297-3"/>
</dbReference>
<dbReference type="Antibodypedia" id="15113">
    <property type="antibodies" value="299 antibodies from 33 providers"/>
</dbReference>
<dbReference type="DNASU" id="1136"/>
<dbReference type="Ensembl" id="ENST00000326828.6">
    <molecule id="P32297-2"/>
    <property type="protein sequence ID" value="ENSP00000315602.5"/>
    <property type="gene ID" value="ENSG00000080644.16"/>
</dbReference>
<dbReference type="Ensembl" id="ENST00000348639.7">
    <molecule id="P32297-3"/>
    <property type="protein sequence ID" value="ENSP00000267951.4"/>
    <property type="gene ID" value="ENSG00000080644.16"/>
</dbReference>
<dbReference type="Ensembl" id="ENST00000559658.5">
    <molecule id="P32297-2"/>
    <property type="protein sequence ID" value="ENSP00000452896.1"/>
    <property type="gene ID" value="ENSG00000080644.16"/>
</dbReference>
<dbReference type="GeneID" id="1136"/>
<dbReference type="KEGG" id="hsa:1136"/>
<dbReference type="MANE-Select" id="ENST00000326828.6">
    <property type="protein sequence ID" value="ENSP00000315602.5"/>
    <property type="RefSeq nucleotide sequence ID" value="NM_000743.5"/>
    <property type="RefSeq protein sequence ID" value="NP_000734.2"/>
</dbReference>
<dbReference type="UCSC" id="uc002beb.4">
    <molecule id="P32297-2"/>
    <property type="organism name" value="human"/>
</dbReference>
<dbReference type="AGR" id="HGNC:1957"/>
<dbReference type="CTD" id="1136"/>
<dbReference type="DisGeNET" id="1136"/>
<dbReference type="GeneCards" id="CHRNA3"/>
<dbReference type="HGNC" id="HGNC:1957">
    <property type="gene designation" value="CHRNA3"/>
</dbReference>
<dbReference type="HPA" id="ENSG00000080644">
    <property type="expression patterns" value="Group enriched (adrenal gland, lymphoid tissue, retina)"/>
</dbReference>
<dbReference type="MalaCards" id="CHRNA3"/>
<dbReference type="MIM" id="118503">
    <property type="type" value="gene"/>
</dbReference>
<dbReference type="MIM" id="191800">
    <property type="type" value="phenotype"/>
</dbReference>
<dbReference type="MIM" id="612052">
    <property type="type" value="phenotype"/>
</dbReference>
<dbReference type="neXtProt" id="NX_P32297"/>
<dbReference type="OpenTargets" id="ENSG00000080644"/>
<dbReference type="PharmGKB" id="PA113"/>
<dbReference type="VEuPathDB" id="HostDB:ENSG00000080644"/>
<dbReference type="eggNOG" id="KOG3645">
    <property type="taxonomic scope" value="Eukaryota"/>
</dbReference>
<dbReference type="GeneTree" id="ENSGT00940000158487"/>
<dbReference type="HOGENOM" id="CLU_018074_1_0_1"/>
<dbReference type="InParanoid" id="P32297"/>
<dbReference type="OMA" id="FANYNQY"/>
<dbReference type="OrthoDB" id="5975154at2759"/>
<dbReference type="PAN-GO" id="P32297">
    <property type="GO annotations" value="9 GO annotations based on evolutionary models"/>
</dbReference>
<dbReference type="PhylomeDB" id="P32297"/>
<dbReference type="TreeFam" id="TF315605"/>
<dbReference type="PathwayCommons" id="P32297"/>
<dbReference type="Reactome" id="R-HSA-629587">
    <property type="pathway name" value="Highly sodium permeable postsynaptic acetylcholine nicotinic receptors"/>
</dbReference>
<dbReference type="Reactome" id="R-HSA-629594">
    <property type="pathway name" value="Highly calcium permeable postsynaptic nicotinic acetylcholine receptors"/>
</dbReference>
<dbReference type="Reactome" id="R-HSA-629597">
    <property type="pathway name" value="Highly calcium permeable nicotinic acetylcholine receptors"/>
</dbReference>
<dbReference type="SignaLink" id="P32297"/>
<dbReference type="BioGRID-ORCS" id="1136">
    <property type="hits" value="12 hits in 1166 CRISPR screens"/>
</dbReference>
<dbReference type="ChiTaRS" id="CHRNA3">
    <property type="organism name" value="human"/>
</dbReference>
<dbReference type="GeneWiki" id="CHRNA3"/>
<dbReference type="GenomeRNAi" id="1136"/>
<dbReference type="Pharos" id="P32297">
    <property type="development level" value="Tclin"/>
</dbReference>
<dbReference type="PRO" id="PR:P32297"/>
<dbReference type="Proteomes" id="UP000005640">
    <property type="component" value="Chromosome 15"/>
</dbReference>
<dbReference type="RNAct" id="P32297">
    <property type="molecule type" value="protein"/>
</dbReference>
<dbReference type="Bgee" id="ENSG00000080644">
    <property type="expression patterns" value="Expressed in pigmented layer of retina and 139 other cell types or tissues"/>
</dbReference>
<dbReference type="ExpressionAtlas" id="P32297">
    <property type="expression patterns" value="baseline and differential"/>
</dbReference>
<dbReference type="GO" id="GO:0005892">
    <property type="term" value="C:acetylcholine-gated channel complex"/>
    <property type="evidence" value="ECO:0000314"/>
    <property type="project" value="UniProtKB"/>
</dbReference>
<dbReference type="GO" id="GO:0034703">
    <property type="term" value="C:cation channel complex"/>
    <property type="evidence" value="ECO:0000314"/>
    <property type="project" value="UniProt"/>
</dbReference>
<dbReference type="GO" id="GO:0036064">
    <property type="term" value="C:ciliary basal body"/>
    <property type="evidence" value="ECO:0000314"/>
    <property type="project" value="HPA"/>
</dbReference>
<dbReference type="GO" id="GO:0005829">
    <property type="term" value="C:cytosol"/>
    <property type="evidence" value="ECO:0000314"/>
    <property type="project" value="HPA"/>
</dbReference>
<dbReference type="GO" id="GO:0030425">
    <property type="term" value="C:dendrite"/>
    <property type="evidence" value="ECO:0000250"/>
    <property type="project" value="UniProtKB"/>
</dbReference>
<dbReference type="GO" id="GO:0005783">
    <property type="term" value="C:endoplasmic reticulum"/>
    <property type="evidence" value="ECO:0007669"/>
    <property type="project" value="UniProtKB-SubCell"/>
</dbReference>
<dbReference type="GO" id="GO:0005794">
    <property type="term" value="C:Golgi apparatus"/>
    <property type="evidence" value="ECO:0007669"/>
    <property type="project" value="UniProtKB-SubCell"/>
</dbReference>
<dbReference type="GO" id="GO:0043231">
    <property type="term" value="C:intracellular membrane-bounded organelle"/>
    <property type="evidence" value="ECO:0000314"/>
    <property type="project" value="HPA"/>
</dbReference>
<dbReference type="GO" id="GO:0016020">
    <property type="term" value="C:membrane"/>
    <property type="evidence" value="ECO:0000303"/>
    <property type="project" value="UniProtKB"/>
</dbReference>
<dbReference type="GO" id="GO:0043005">
    <property type="term" value="C:neuron projection"/>
    <property type="evidence" value="ECO:0000318"/>
    <property type="project" value="GO_Central"/>
</dbReference>
<dbReference type="GO" id="GO:0043025">
    <property type="term" value="C:neuronal cell body"/>
    <property type="evidence" value="ECO:0000250"/>
    <property type="project" value="UniProtKB"/>
</dbReference>
<dbReference type="GO" id="GO:0098878">
    <property type="term" value="C:neurotransmitter receptor complex"/>
    <property type="evidence" value="ECO:0000314"/>
    <property type="project" value="UniProt"/>
</dbReference>
<dbReference type="GO" id="GO:0016607">
    <property type="term" value="C:nuclear speck"/>
    <property type="evidence" value="ECO:0000314"/>
    <property type="project" value="HPA"/>
</dbReference>
<dbReference type="GO" id="GO:0005730">
    <property type="term" value="C:nucleolus"/>
    <property type="evidence" value="ECO:0000314"/>
    <property type="project" value="HPA"/>
</dbReference>
<dbReference type="GO" id="GO:0005886">
    <property type="term" value="C:plasma membrane"/>
    <property type="evidence" value="ECO:0000314"/>
    <property type="project" value="HPA"/>
</dbReference>
<dbReference type="GO" id="GO:0044853">
    <property type="term" value="C:plasma membrane raft"/>
    <property type="evidence" value="ECO:0000250"/>
    <property type="project" value="ARUK-UCL"/>
</dbReference>
<dbReference type="GO" id="GO:0045211">
    <property type="term" value="C:postsynaptic membrane"/>
    <property type="evidence" value="ECO:0007669"/>
    <property type="project" value="UniProtKB-KW"/>
</dbReference>
<dbReference type="GO" id="GO:0045202">
    <property type="term" value="C:synapse"/>
    <property type="evidence" value="ECO:0000318"/>
    <property type="project" value="GO_Central"/>
</dbReference>
<dbReference type="GO" id="GO:0042166">
    <property type="term" value="F:acetylcholine binding"/>
    <property type="evidence" value="ECO:0000305"/>
    <property type="project" value="UniProtKB"/>
</dbReference>
<dbReference type="GO" id="GO:0015464">
    <property type="term" value="F:acetylcholine receptor activity"/>
    <property type="evidence" value="ECO:0000314"/>
    <property type="project" value="UniProtKB"/>
</dbReference>
<dbReference type="GO" id="GO:0022848">
    <property type="term" value="F:acetylcholine-gated monoatomic cation-selective channel activity"/>
    <property type="evidence" value="ECO:0000314"/>
    <property type="project" value="UniProtKB"/>
</dbReference>
<dbReference type="GO" id="GO:0015276">
    <property type="term" value="F:ligand-gated monoatomic ion channel activity"/>
    <property type="evidence" value="ECO:0000304"/>
    <property type="project" value="DFLAT"/>
</dbReference>
<dbReference type="GO" id="GO:0095500">
    <property type="term" value="P:acetylcholine receptor signaling pathway"/>
    <property type="evidence" value="ECO:0000250"/>
    <property type="project" value="ARUK-UCL"/>
</dbReference>
<dbReference type="GO" id="GO:0035095">
    <property type="term" value="P:behavioral response to nicotine"/>
    <property type="evidence" value="ECO:0000315"/>
    <property type="project" value="UniProtKB"/>
</dbReference>
<dbReference type="GO" id="GO:0060079">
    <property type="term" value="P:excitatory postsynaptic potential"/>
    <property type="evidence" value="ECO:0000250"/>
    <property type="project" value="UniProtKB"/>
</dbReference>
<dbReference type="GO" id="GO:0007626">
    <property type="term" value="P:locomotory behavior"/>
    <property type="evidence" value="ECO:0000250"/>
    <property type="project" value="UniProtKB"/>
</dbReference>
<dbReference type="GO" id="GO:0051899">
    <property type="term" value="P:membrane depolarization"/>
    <property type="evidence" value="ECO:0000318"/>
    <property type="project" value="GO_Central"/>
</dbReference>
<dbReference type="GO" id="GO:0034220">
    <property type="term" value="P:monoatomic ion transmembrane transport"/>
    <property type="evidence" value="ECO:0000318"/>
    <property type="project" value="GO_Central"/>
</dbReference>
<dbReference type="GO" id="GO:0006811">
    <property type="term" value="P:monoatomic ion transport"/>
    <property type="evidence" value="ECO:0000303"/>
    <property type="project" value="UniProtKB"/>
</dbReference>
<dbReference type="GO" id="GO:0007399">
    <property type="term" value="P:nervous system development"/>
    <property type="evidence" value="ECO:0000315"/>
    <property type="project" value="UniProtKB"/>
</dbReference>
<dbReference type="GO" id="GO:0007274">
    <property type="term" value="P:neuromuscular synaptic transmission"/>
    <property type="evidence" value="ECO:0000318"/>
    <property type="project" value="GO_Central"/>
</dbReference>
<dbReference type="GO" id="GO:0014056">
    <property type="term" value="P:regulation of acetylcholine secretion, neurotransmission"/>
    <property type="evidence" value="ECO:0000250"/>
    <property type="project" value="UniProtKB"/>
</dbReference>
<dbReference type="GO" id="GO:0048814">
    <property type="term" value="P:regulation of dendrite morphogenesis"/>
    <property type="evidence" value="ECO:0000250"/>
    <property type="project" value="UniProtKB"/>
</dbReference>
<dbReference type="GO" id="GO:0042391">
    <property type="term" value="P:regulation of membrane potential"/>
    <property type="evidence" value="ECO:0000250"/>
    <property type="project" value="UniProtKB"/>
</dbReference>
<dbReference type="GO" id="GO:0006940">
    <property type="term" value="P:regulation of smooth muscle contraction"/>
    <property type="evidence" value="ECO:0000250"/>
    <property type="project" value="UniProtKB"/>
</dbReference>
<dbReference type="GO" id="GO:1905144">
    <property type="term" value="P:response to acetylcholine"/>
    <property type="evidence" value="ECO:0000250"/>
    <property type="project" value="ARUK-UCL"/>
</dbReference>
<dbReference type="GO" id="GO:0035094">
    <property type="term" value="P:response to nicotine"/>
    <property type="evidence" value="ECO:0000318"/>
    <property type="project" value="GO_Central"/>
</dbReference>
<dbReference type="GO" id="GO:0007165">
    <property type="term" value="P:signal transduction"/>
    <property type="evidence" value="ECO:0000314"/>
    <property type="project" value="UniProtKB"/>
</dbReference>
<dbReference type="GO" id="GO:0060084">
    <property type="term" value="P:synaptic transmission involved in micturition"/>
    <property type="evidence" value="ECO:0000315"/>
    <property type="project" value="UniProtKB"/>
</dbReference>
<dbReference type="GO" id="GO:0007271">
    <property type="term" value="P:synaptic transmission, cholinergic"/>
    <property type="evidence" value="ECO:0000250"/>
    <property type="project" value="UniProtKB"/>
</dbReference>
<dbReference type="CDD" id="cd19016">
    <property type="entry name" value="LGIC_ECD_nAChR_A3"/>
    <property type="match status" value="1"/>
</dbReference>
<dbReference type="CDD" id="cd19064">
    <property type="entry name" value="LGIC_TM_nAChR"/>
    <property type="match status" value="1"/>
</dbReference>
<dbReference type="FunFam" id="2.70.170.10:FF:000008">
    <property type="entry name" value="Cholinergic receptor nicotinic alpha 6 subunit"/>
    <property type="match status" value="1"/>
</dbReference>
<dbReference type="FunFam" id="1.20.58.390:FF:000017">
    <property type="entry name" value="Neuronal acetylcholine receptor subunit alpha-3"/>
    <property type="match status" value="1"/>
</dbReference>
<dbReference type="FunFam" id="1.20.58.390:FF:000001">
    <property type="entry name" value="Neuronal nicotinic acetylcholine receptor subunit 3"/>
    <property type="match status" value="1"/>
</dbReference>
<dbReference type="Gene3D" id="2.70.170.10">
    <property type="entry name" value="Neurotransmitter-gated ion-channel ligand-binding domain"/>
    <property type="match status" value="1"/>
</dbReference>
<dbReference type="Gene3D" id="1.20.58.390">
    <property type="entry name" value="Neurotransmitter-gated ion-channel transmembrane domain"/>
    <property type="match status" value="2"/>
</dbReference>
<dbReference type="InterPro" id="IPR006202">
    <property type="entry name" value="Neur_chan_lig-bd"/>
</dbReference>
<dbReference type="InterPro" id="IPR036734">
    <property type="entry name" value="Neur_chan_lig-bd_sf"/>
</dbReference>
<dbReference type="InterPro" id="IPR006201">
    <property type="entry name" value="Neur_channel"/>
</dbReference>
<dbReference type="InterPro" id="IPR036719">
    <property type="entry name" value="Neuro-gated_channel_TM_sf"/>
</dbReference>
<dbReference type="InterPro" id="IPR038050">
    <property type="entry name" value="Neuro_actylchol_rec"/>
</dbReference>
<dbReference type="InterPro" id="IPR006029">
    <property type="entry name" value="Neurotrans-gated_channel_TM"/>
</dbReference>
<dbReference type="InterPro" id="IPR018000">
    <property type="entry name" value="Neurotransmitter_ion_chnl_CS"/>
</dbReference>
<dbReference type="InterPro" id="IPR002394">
    <property type="entry name" value="Nicotinic_acetylcholine_rcpt"/>
</dbReference>
<dbReference type="NCBIfam" id="TIGR00860">
    <property type="entry name" value="LIC"/>
    <property type="match status" value="1"/>
</dbReference>
<dbReference type="PANTHER" id="PTHR18945">
    <property type="entry name" value="NEUROTRANSMITTER GATED ION CHANNEL"/>
    <property type="match status" value="1"/>
</dbReference>
<dbReference type="Pfam" id="PF02931">
    <property type="entry name" value="Neur_chan_LBD"/>
    <property type="match status" value="1"/>
</dbReference>
<dbReference type="Pfam" id="PF02932">
    <property type="entry name" value="Neur_chan_memb"/>
    <property type="match status" value="1"/>
</dbReference>
<dbReference type="PRINTS" id="PR00254">
    <property type="entry name" value="NICOTINICR"/>
</dbReference>
<dbReference type="PRINTS" id="PR00252">
    <property type="entry name" value="NRIONCHANNEL"/>
</dbReference>
<dbReference type="SUPFAM" id="SSF90112">
    <property type="entry name" value="Neurotransmitter-gated ion-channel transmembrane pore"/>
    <property type="match status" value="1"/>
</dbReference>
<dbReference type="SUPFAM" id="SSF63712">
    <property type="entry name" value="Nicotinic receptor ligand binding domain-like"/>
    <property type="match status" value="1"/>
</dbReference>
<dbReference type="PROSITE" id="PS00236">
    <property type="entry name" value="NEUROTR_ION_CHANNEL"/>
    <property type="match status" value="1"/>
</dbReference>
<reference key="1">
    <citation type="journal article" date="1990" name="Neurosci. Lett.">
        <title>Molecular cloning of human neuronal nicotinic receptor alpha 3-subunit.</title>
        <authorList>
            <person name="Fornasari D."/>
            <person name="Chini B."/>
            <person name="Tarroni P."/>
            <person name="Clementi F."/>
        </authorList>
    </citation>
    <scope>NUCLEOTIDE SEQUENCE [MRNA] (ISOFORM 1)</scope>
</reference>
<reference key="2">
    <citation type="journal article" date="1991" name="Exp. Neurol.">
        <title>Expression of mRNAs in human thymus coding for the alpha 3 subunit of a neuronal acetylcholine receptor.</title>
        <authorList>
            <person name="Mihovilovic M."/>
            <person name="Roses A.D."/>
        </authorList>
    </citation>
    <scope>NUCLEOTIDE SEQUENCE [MRNA] (ISOFORM 1)</scope>
    <source>
        <tissue>Thymus</tissue>
    </source>
</reference>
<reference key="3">
    <citation type="journal article" date="1996" name="J. Mol. Neurosci.">
        <title>Comparative structure of human neuronal alpha 2-alpha 7 and beta 2-beta 4 nicotinic acetylcholine receptor subunits and functional expression of the alpha 2, alpha 3, alpha 4, alpha 7, beta 2, and beta 4 subunits.</title>
        <authorList>
            <person name="Elliott K.J."/>
            <person name="Ellis S.B."/>
            <person name="Berckhan K.J."/>
            <person name="Urrutia A."/>
            <person name="Chavez-Noriega L.E."/>
            <person name="Johnson E.C."/>
            <person name="Velicelebi G."/>
            <person name="Harpold M.M."/>
        </authorList>
    </citation>
    <scope>NUCLEOTIDE SEQUENCE [MRNA] (ISOFORM 2)</scope>
    <scope>VARIANT LEU-23 DEL</scope>
    <scope>SUBUNIT</scope>
    <scope>FUNCTION</scope>
    <scope>ACTIVITY REGULATION</scope>
</reference>
<reference key="4">
    <citation type="journal article" date="1997" name="FEBS Lett.">
        <title>Cloning and sequence of full-length cDNAs encoding the human neuronal nicotinic acetylcholine receptor (nAChR) subunits beta3 and beta4 and expression of seven nAChR subunits in the human neuroblastoma cell line SH-SY5Y and/or IMR-32.</title>
        <authorList>
            <person name="Groot Kormelink P.J."/>
            <person name="Luyten W.H.M.L."/>
        </authorList>
    </citation>
    <scope>NUCLEOTIDE SEQUENCE [MRNA] (ISOFORM 1)</scope>
    <scope>VARIANT LEU-23 DEL</scope>
</reference>
<reference key="5">
    <citation type="journal article" date="1998" name="Hum. Genet.">
        <title>The structures of the human neuronal nicotinic acetylcholine receptor beta2- and alpha3-subunit genes (CHRNB2 and CHRNA3).</title>
        <authorList>
            <person name="Rempel N."/>
            <person name="Heyers S."/>
            <person name="Engels H."/>
            <person name="Sleegers E."/>
            <person name="Steinlein O.K."/>
        </authorList>
    </citation>
    <scope>NUCLEOTIDE SEQUENCE [GENOMIC DNA] (ISOFORM 2)</scope>
    <scope>VARIANT LEU-23 DEL</scope>
</reference>
<reference key="6">
    <citation type="journal article" date="2001" name="J. Hum. Genet.">
        <title>Characterization of the human beta4 nAChR gene and polymorphisms in CHRNA3 and CHRNB4.</title>
        <authorList>
            <person name="Lev-Lehman E."/>
            <person name="Bercovich D."/>
            <person name="Xu W."/>
            <person name="Stockton D.W."/>
            <person name="Beaudet A.L."/>
        </authorList>
    </citation>
    <scope>NUCLEOTIDE SEQUENCE [GENOMIC DNA]</scope>
</reference>
<reference key="7">
    <citation type="submission" date="2003-05" db="EMBL/GenBank/DDBJ databases">
        <title>Cloning of human full-length CDSs in BD Creator(TM) system donor vector.</title>
        <authorList>
            <person name="Kalnine N."/>
            <person name="Chen X."/>
            <person name="Rolfs A."/>
            <person name="Halleck A."/>
            <person name="Hines L."/>
            <person name="Eisenstein S."/>
            <person name="Koundinya M."/>
            <person name="Raphael J."/>
            <person name="Moreira D."/>
            <person name="Kelley T."/>
            <person name="LaBaer J."/>
            <person name="Lin Y."/>
            <person name="Phelan M."/>
            <person name="Farmer A."/>
        </authorList>
    </citation>
    <scope>NUCLEOTIDE SEQUENCE [LARGE SCALE MRNA] (ISOFORMS 2 AND 3)</scope>
</reference>
<reference key="8">
    <citation type="journal article" date="2006" name="Nature">
        <title>Analysis of the DNA sequence and duplication history of human chromosome 15.</title>
        <authorList>
            <person name="Zody M.C."/>
            <person name="Garber M."/>
            <person name="Sharpe T."/>
            <person name="Young S.K."/>
            <person name="Rowen L."/>
            <person name="O'Neill K."/>
            <person name="Whittaker C.A."/>
            <person name="Kamal M."/>
            <person name="Chang J.L."/>
            <person name="Cuomo C.A."/>
            <person name="Dewar K."/>
            <person name="FitzGerald M.G."/>
            <person name="Kodira C.D."/>
            <person name="Madan A."/>
            <person name="Qin S."/>
            <person name="Yang X."/>
            <person name="Abbasi N."/>
            <person name="Abouelleil A."/>
            <person name="Arachchi H.M."/>
            <person name="Baradarani L."/>
            <person name="Birditt B."/>
            <person name="Bloom S."/>
            <person name="Bloom T."/>
            <person name="Borowsky M.L."/>
            <person name="Burke J."/>
            <person name="Butler J."/>
            <person name="Cook A."/>
            <person name="DeArellano K."/>
            <person name="DeCaprio D."/>
            <person name="Dorris L. III"/>
            <person name="Dors M."/>
            <person name="Eichler E.E."/>
            <person name="Engels R."/>
            <person name="Fahey J."/>
            <person name="Fleetwood P."/>
            <person name="Friedman C."/>
            <person name="Gearin G."/>
            <person name="Hall J.L."/>
            <person name="Hensley G."/>
            <person name="Johnson E."/>
            <person name="Jones C."/>
            <person name="Kamat A."/>
            <person name="Kaur A."/>
            <person name="Locke D.P."/>
            <person name="Madan A."/>
            <person name="Munson G."/>
            <person name="Jaffe D.B."/>
            <person name="Lui A."/>
            <person name="Macdonald P."/>
            <person name="Mauceli E."/>
            <person name="Naylor J.W."/>
            <person name="Nesbitt R."/>
            <person name="Nicol R."/>
            <person name="O'Leary S.B."/>
            <person name="Ratcliffe A."/>
            <person name="Rounsley S."/>
            <person name="She X."/>
            <person name="Sneddon K.M.B."/>
            <person name="Stewart S."/>
            <person name="Sougnez C."/>
            <person name="Stone S.M."/>
            <person name="Topham K."/>
            <person name="Vincent D."/>
            <person name="Wang S."/>
            <person name="Zimmer A.R."/>
            <person name="Birren B.W."/>
            <person name="Hood L."/>
            <person name="Lander E.S."/>
            <person name="Nusbaum C."/>
        </authorList>
    </citation>
    <scope>NUCLEOTIDE SEQUENCE [LARGE SCALE GENOMIC DNA]</scope>
</reference>
<reference key="9">
    <citation type="journal article" date="2004" name="Genome Res.">
        <title>The status, quality, and expansion of the NIH full-length cDNA project: the Mammalian Gene Collection (MGC).</title>
        <authorList>
            <consortium name="The MGC Project Team"/>
        </authorList>
    </citation>
    <scope>NUCLEOTIDE SEQUENCE [LARGE SCALE MRNA] (ISOFORMS 2 AND 3)</scope>
    <scope>VARIANT LEU-23 DEL</scope>
    <source>
        <tissue>Brain</tissue>
        <tissue>Lung</tissue>
    </source>
</reference>
<reference key="10">
    <citation type="submission" date="2001-05" db="EMBL/GenBank/DDBJ databases">
        <title>Cloning cholinergic receptors in human keratinocytes.</title>
        <authorList>
            <person name="Arredondo J."/>
            <person name="Grando S.A."/>
        </authorList>
    </citation>
    <scope>NUCLEOTIDE SEQUENCE [MRNA] OF 7-495 (ISOFORMS 1/2)</scope>
    <source>
        <tissue>Keratinocyte</tissue>
    </source>
</reference>
<reference key="11">
    <citation type="submission" date="1990-06" db="EMBL/GenBank/DDBJ databases">
        <authorList>
            <person name="Anand R."/>
            <person name="Lindstrom J."/>
        </authorList>
    </citation>
    <scope>NUCLEOTIDE SEQUENCE [MRNA] OF 32-505 (ISOFORMS 1/2)</scope>
    <source>
        <tissue>Brain</tissue>
    </source>
</reference>
<reference key="12">
    <citation type="journal article" date="1996" name="J. Biol. Chem.">
        <title>Assembly of human neuronal nicotinic receptor alpha5 subunits with alpha3, beta2, and beta4 subunits.</title>
        <authorList>
            <person name="Wang F."/>
            <person name="Gerzanich V."/>
            <person name="Wells G.B."/>
            <person name="Anand R."/>
            <person name="Peng X."/>
            <person name="Keyser K."/>
            <person name="Lindstrom J."/>
        </authorList>
    </citation>
    <scope>FUNCTION</scope>
    <scope>SUBUNIT</scope>
</reference>
<reference key="13">
    <citation type="journal article" date="2000" name="J. Physiol. (Lond.)">
        <title>Stoichiometry of human recombinant neuronal nicotinic receptors containing the b3 subunit expressed in Xenopus oocytes.</title>
        <authorList>
            <person name="Boorman J.P."/>
            <person name="Groot-Kormelink P.J."/>
            <person name="Sivilotti L.G."/>
        </authorList>
    </citation>
    <scope>FUNCTION</scope>
    <scope>SUBUNIT</scope>
    <scope>STOICHIOMETRY</scope>
    <scope>ACTIVITY REGULATION</scope>
    <scope>MUTAGENESIS OF VAL-279</scope>
</reference>
<reference key="14">
    <citation type="journal article" date="2004" name="Biochemistry">
        <title>Alpha-conotoxins ImI and ImII target distinct regions of the human alpha7 nicotinic acetylcholine receptor and distinguish human nicotinic receptor subtypes.</title>
        <authorList>
            <person name="Ellison M."/>
            <person name="Gao F."/>
            <person name="Wang H.L."/>
            <person name="Sine S.M."/>
            <person name="McIntosh J.M."/>
            <person name="Olivera B.M."/>
        </authorList>
    </citation>
    <scope>ACTIVITY REGULATION</scope>
</reference>
<reference key="15">
    <citation type="journal article" date="2005" name="Mol. Pharmacol.">
        <title>RIC-3 enhances functional expression of multiple nicotinic acetylcholine receptor subtypes in mammalian cells.</title>
        <authorList>
            <person name="Lansdell S.J."/>
            <person name="Gee V.J."/>
            <person name="Harkness P.C."/>
            <person name="Doward A.I."/>
            <person name="Baker E.R."/>
            <person name="Gibb A.J."/>
            <person name="Millar N.S."/>
        </authorList>
    </citation>
    <scope>INTERACTION WITH RIC3</scope>
</reference>
<reference key="16">
    <citation type="journal article" date="2011" name="Mol. Pharmacol.">
        <title>Acetylcholine receptor (AChR) alpha5 subunit variant associated with risk for nicotine dependence and lung cancer reduces (alpha4beta2)(2)alpha5 AChR function.</title>
        <authorList>
            <person name="Kuryatov A."/>
            <person name="Berrettini W."/>
            <person name="Lindstrom J."/>
        </authorList>
    </citation>
    <scope>FUNCTION</scope>
    <scope>CATALYTIC ACTIVITY</scope>
    <scope>SUBUNIT</scope>
    <scope>ACTIVITY REGULATION</scope>
</reference>
<reference key="17">
    <citation type="journal article" date="2016" name="J. Neurochem.">
        <title>Functional interaction between Lypd6 and nicotinic acetylcholine receptors.</title>
        <authorList>
            <person name="Arvaniti M."/>
            <person name="Jensen M.M."/>
            <person name="Soni N."/>
            <person name="Wang H."/>
            <person name="Klein A.B."/>
            <person name="Thiriet N."/>
            <person name="Pinborg L.H."/>
            <person name="Muldoon P.P."/>
            <person name="Wienecke J."/>
            <person name="Imad Damaj M."/>
            <person name="Kohlmeier K.A."/>
            <person name="Gondre-Lewis M.C."/>
            <person name="Mikkelsen J.D."/>
            <person name="Thomsen M.S."/>
        </authorList>
    </citation>
    <scope>INTERACTION WITH LYPD6</scope>
</reference>
<reference evidence="30 31" key="18">
    <citation type="journal article" date="2019" name="Neuron">
        <title>Agonist Selectivity and Ion Permeation in the alpha3beta4 Ganglionic Nicotinic Receptor.</title>
        <authorList>
            <person name="Gharpure A."/>
            <person name="Teng J."/>
            <person name="Zhuang Y."/>
            <person name="Noviello C.M."/>
            <person name="Walsh R.M."/>
            <person name="Cabuco R."/>
            <person name="Howard R.J."/>
            <person name="Zaveri N.T."/>
            <person name="Lindahl E."/>
            <person name="Hibbs R.E."/>
        </authorList>
    </citation>
    <scope>STRUCTURE BY ELECTRON MICROSCOPY (3.34 ANGSTROMS) OF 32-431 AND 434-505 IN COMPLEX WITH CHRNB4 AND NICOTINE</scope>
    <scope>DISULFIDE BONDS</scope>
    <scope>ACTIVITY REGULATION</scope>
    <scope>FUNCTION</scope>
</reference>
<reference key="19">
    <citation type="journal article" date="2008" name="Nature">
        <title>Genomics: when the smoke clears.</title>
        <authorList>
            <person name="Chanock S.J."/>
            <person name="Hunter D.J."/>
        </authorList>
    </citation>
    <scope>INVOLVEMENT IN SQTL3 AND LUNG CANCER</scope>
</reference>
<reference key="20">
    <citation type="journal article" date="2008" name="Nature">
        <title>A susceptibility locus for lung cancer maps to nicotinic acetylcholine receptor subunit genes on 15q25.</title>
        <authorList>
            <person name="Hung R.J."/>
            <person name="McKay J.D."/>
            <person name="Gaborieau V."/>
            <person name="Boffetta P."/>
            <person name="Hashibe M."/>
            <person name="Zaridze D."/>
            <person name="Mukeria A."/>
            <person name="Szeszenia-Dabrowska N."/>
            <person name="Lissowska J."/>
            <person name="Rudnai P."/>
            <person name="Fabianova E."/>
            <person name="Mates D."/>
            <person name="Bencko V."/>
            <person name="Foretova L."/>
            <person name="Janout V."/>
            <person name="Chen C."/>
            <person name="Goodman G."/>
            <person name="Field J.K."/>
            <person name="Liloglou T."/>
            <person name="Xinarianos G."/>
            <person name="Cassidy A."/>
            <person name="McLaughlin J."/>
            <person name="Liu G."/>
            <person name="Narod S."/>
            <person name="Krokan H.E."/>
            <person name="Skorpen F."/>
            <person name="Elvestad M.B."/>
            <person name="Hveem K."/>
            <person name="Vatten L."/>
            <person name="Linseisen J."/>
            <person name="Clavel-Chapelon F."/>
            <person name="Vineis P."/>
            <person name="Bueno-de-Mesquita H.B."/>
            <person name="Lund E."/>
            <person name="Martinez C."/>
            <person name="Bingham S."/>
            <person name="Rasmuson T."/>
            <person name="Hainaut P."/>
            <person name="Riboli E."/>
            <person name="Ahrens W."/>
            <person name="Benhamou S."/>
            <person name="Lagiou P."/>
            <person name="Trichopoulos D."/>
            <person name="Holcatova I."/>
            <person name="Merletti F."/>
            <person name="Kjaerheim K."/>
            <person name="Agudo A."/>
            <person name="Macfarlane G."/>
            <person name="Talamini R."/>
            <person name="Simonato L."/>
            <person name="Lowry R."/>
            <person name="Conway D.I."/>
            <person name="Znaor A."/>
            <person name="Healy C."/>
            <person name="Zelenika D."/>
            <person name="Boland A."/>
            <person name="Delepine M."/>
            <person name="Foglio M."/>
            <person name="Lechner D."/>
            <person name="Matsuda F."/>
            <person name="Blanche H."/>
            <person name="Gut I."/>
            <person name="Heath S."/>
            <person name="Lathrop M."/>
            <person name="Brennan P."/>
        </authorList>
    </citation>
    <scope>INVOLVEMENT IN SQTL3 AND LUNG CANCER</scope>
</reference>
<reference key="21">
    <citation type="journal article" date="2008" name="Nature">
        <title>A variant associated with nicotine dependence, lung cancer and peripheral arterial disease.</title>
        <authorList>
            <person name="Thorgeirsson T.E."/>
            <person name="Geller F."/>
            <person name="Sulem P."/>
            <person name="Rafnar T."/>
            <person name="Wiste A."/>
            <person name="Magnusson K.P."/>
            <person name="Manolescu A."/>
            <person name="Thorleifsson G."/>
            <person name="Stefansson H."/>
            <person name="Ingason A."/>
            <person name="Stacey S.N."/>
            <person name="Bergthorsson J.T."/>
            <person name="Thorlacius S."/>
            <person name="Gudmundsson J."/>
            <person name="Jonsson T."/>
            <person name="Jakobsdottir M."/>
            <person name="Saemundsdottir J."/>
            <person name="Olafsdottir O."/>
            <person name="Gudmundsson L.J."/>
            <person name="Bjornsdottir G."/>
            <person name="Kristjansson K."/>
            <person name="Skuladottir H."/>
            <person name="Isaksson H.J."/>
            <person name="Gudbjartsson T."/>
            <person name="Jones G.T."/>
            <person name="Mueller T."/>
            <person name="Gottsaeter A."/>
            <person name="Flex A."/>
            <person name="Aben K.K.H."/>
            <person name="de Vegt F."/>
            <person name="Mulders P.F.A."/>
            <person name="Isla D."/>
            <person name="Vidal M.J."/>
            <person name="Asin L."/>
            <person name="Saez B."/>
            <person name="Murillo L."/>
            <person name="Blondal T."/>
            <person name="Kolbeinsson H."/>
            <person name="Stefansson J.G."/>
            <person name="Hansdottir I."/>
            <person name="Runarsdottir V."/>
            <person name="Pola R."/>
            <person name="Lindblad B."/>
            <person name="van Rij A.M."/>
            <person name="Dieplinger B."/>
            <person name="Haltmayer M."/>
            <person name="Mayordomo J.I."/>
            <person name="Kiemeney L.A."/>
            <person name="Matthiasson S.E."/>
            <person name="Oskarsson H."/>
            <person name="Tyrfingsson T."/>
            <person name="Gudbjartsson D.F."/>
            <person name="Gulcher J.R."/>
            <person name="Jonsson S."/>
            <person name="Thorsteinsdottir U."/>
            <person name="Kong A."/>
            <person name="Stefansson K."/>
        </authorList>
    </citation>
    <scope>INVOLVEMENT IN SQTL3 AND LUNG CANCER</scope>
</reference>
<reference key="22">
    <citation type="journal article" date="2008" name="Nat. Genet.">
        <title>Genome-wide association scan of tag SNPs identifies a susceptibility locus for lung cancer at 15q25.1.</title>
        <authorList>
            <person name="Amos C.I."/>
            <person name="Wu X."/>
            <person name="Broderick P."/>
            <person name="Gorlov I.P."/>
            <person name="Gu J."/>
            <person name="Eisen T."/>
            <person name="Dong Q."/>
            <person name="Zhang Q."/>
            <person name="Gu X."/>
            <person name="Vijayakrishnan J."/>
            <person name="Sullivan K."/>
            <person name="Matakidou A."/>
            <person name="Wang Y."/>
            <person name="Mills G."/>
            <person name="Doheny K."/>
            <person name="Tsai Y.-Y."/>
            <person name="Chen W.V."/>
            <person name="Shete S."/>
            <person name="Spitz M.R."/>
            <person name="Houlston R.S."/>
        </authorList>
    </citation>
    <scope>INVOLVEMENT IN SQTL3 AND LUNG CANCER</scope>
</reference>
<reference key="23">
    <citation type="journal article" date="2015" name="Biochem. Pharmacol.">
        <title>UBXN2A regulates nicotinic receptor degradation by modulating the E3 ligase activity of CHIP.</title>
        <authorList>
            <person name="Teng Y."/>
            <person name="Rezvani K."/>
            <person name="De Biasi M."/>
        </authorList>
    </citation>
    <scope>IDENTIFICATION IN A COMPLEX WITH STUB1; VCP AND UBXN2A</scope>
    <scope>INTERACTION WITH UBXN2A</scope>
</reference>
<reference key="24">
    <citation type="journal article" date="2019" name="Am. J. Hum. Genet.">
        <title>CAKUT and autonomic dysfunction caused by acetylcholine receptor mutations.</title>
        <authorList>
            <person name="Mann N."/>
            <person name="Kause F."/>
            <person name="Henze E.K."/>
            <person name="Gharpure A."/>
            <person name="Shril S."/>
            <person name="Connaughton D.M."/>
            <person name="Nakayama M."/>
            <person name="Klaembt V."/>
            <person name="Majmundar A.J."/>
            <person name="Wu C.W."/>
            <person name="Kolvenbach C.M."/>
            <person name="Dai R."/>
            <person name="Chen J."/>
            <person name="van der Ven A.T."/>
            <person name="Ityel H."/>
            <person name="Tooley M.J."/>
            <person name="Kari J.A."/>
            <person name="Bownass L."/>
            <person name="El Desoky S."/>
            <person name="De Franco E."/>
            <person name="Shalaby M."/>
            <person name="Tasic V."/>
            <person name="Bauer S.B."/>
            <person name="Lee R.S."/>
            <person name="Beckel J.M."/>
            <person name="Yu W."/>
            <person name="Mane S.M."/>
            <person name="Lifton R.P."/>
            <person name="Reutter H."/>
            <person name="Ellard S."/>
            <person name="Hibbs R.E."/>
            <person name="Kawate T."/>
            <person name="Hildebrandt F."/>
        </authorList>
    </citation>
    <scope>FUNCTION</scope>
    <scope>SUBCELLULAR LOCATION</scope>
    <scope>INVOLVEMENT IN BAIPRCK</scope>
    <scope>VARIANT BAIPRCK 340-SER--ALA-505 DEL</scope>
    <scope>CHARACTERIZATION OF VARIANT BAIPRCK 340-SER--ALA-505 DEL</scope>
</reference>
<keyword id="KW-0002">3D-structure</keyword>
<keyword id="KW-0025">Alternative splicing</keyword>
<keyword id="KW-1003">Cell membrane</keyword>
<keyword id="KW-0225">Disease variant</keyword>
<keyword id="KW-1015">Disulfide bond</keyword>
<keyword id="KW-0256">Endoplasmic reticulum</keyword>
<keyword id="KW-0325">Glycoprotein</keyword>
<keyword id="KW-0333">Golgi apparatus</keyword>
<keyword id="KW-0407">Ion channel</keyword>
<keyword id="KW-0406">Ion transport</keyword>
<keyword id="KW-1071">Ligand-gated ion channel</keyword>
<keyword id="KW-0472">Membrane</keyword>
<keyword id="KW-0597">Phosphoprotein</keyword>
<keyword id="KW-1267">Proteomics identification</keyword>
<keyword id="KW-0675">Receptor</keyword>
<keyword id="KW-1185">Reference proteome</keyword>
<keyword id="KW-0732">Signal</keyword>
<keyword id="KW-0770">Synapse</keyword>
<keyword id="KW-0812">Transmembrane</keyword>
<keyword id="KW-1133">Transmembrane helix</keyword>
<keyword id="KW-0813">Transport</keyword>
<keyword id="KW-0832">Ubl conjugation</keyword>
<sequence length="505" mass="57480">MGSGPLSLPLALSPPRLLLLLLLSLLPVARASEAEHRLFERLFEDYNEIIRPVANVSDPVIIHFEVSMSQLVKVDEVNQIMETNLWLKQIWNDYKLKWNPSDYGGAEFMRVPAQKIWKPDIVLYNNAVGDFQVDDKTKALLKYTGEVTWIPPAIFKSSCKIDVTYFPFDYQNCTMKFGSWSYDKAKIDLVLIGSSMNLKDYWESGEWAIIKAPGYKHDIKYNCCEEIYPDITYSLYIRRLPLFYTINLIIPCLLISFLTVLVFYLPSDCGEKVTLCISVLLSLTVFLLVITETIPSTSLVIPLIGEYLLFTMIFVTLSIVITVFVLNVHYRTPTTHTMPSWVKTVFLNLLPRVMFMTRPTSNEGNAQKPRPLYGAELSNLNCFSRAESKGCKEGYPCQDGMCGYCHHRRIKISNFSANLTRSSSSESVDAVLSLSALSPEIKEAIQSVKYIAENMKAQNEAKEIQDDWKYVAMVIDRIFLWVFTLVCILGTAGLFLQPLMAREDA</sequence>
<protein>
    <recommendedName>
        <fullName>Neuronal acetylcholine receptor subunit alpha-3</fullName>
    </recommendedName>
</protein>
<proteinExistence type="evidence at protein level"/>